<evidence type="ECO:0000255" key="1">
    <source>
        <dbReference type="HAMAP-Rule" id="MF_00034"/>
    </source>
</evidence>
<protein>
    <recommendedName>
        <fullName evidence="1">Crossover junction endodeoxyribonuclease RuvC</fullName>
        <ecNumber evidence="1">3.1.21.10</ecNumber>
    </recommendedName>
    <alternativeName>
        <fullName evidence="1">Holliday junction nuclease RuvC</fullName>
    </alternativeName>
    <alternativeName>
        <fullName evidence="1">Holliday junction resolvase RuvC</fullName>
    </alternativeName>
</protein>
<feature type="chain" id="PRO_1000071028" description="Crossover junction endodeoxyribonuclease RuvC">
    <location>
        <begin position="1"/>
        <end position="185"/>
    </location>
</feature>
<feature type="active site" evidence="1">
    <location>
        <position position="7"/>
    </location>
</feature>
<feature type="active site" evidence="1">
    <location>
        <position position="66"/>
    </location>
</feature>
<feature type="active site" evidence="1">
    <location>
        <position position="137"/>
    </location>
</feature>
<feature type="binding site" evidence="1">
    <location>
        <position position="7"/>
    </location>
    <ligand>
        <name>Mg(2+)</name>
        <dbReference type="ChEBI" id="CHEBI:18420"/>
        <label>1</label>
    </ligand>
</feature>
<feature type="binding site" evidence="1">
    <location>
        <position position="66"/>
    </location>
    <ligand>
        <name>Mg(2+)</name>
        <dbReference type="ChEBI" id="CHEBI:18420"/>
        <label>2</label>
    </ligand>
</feature>
<feature type="binding site" evidence="1">
    <location>
        <position position="137"/>
    </location>
    <ligand>
        <name>Mg(2+)</name>
        <dbReference type="ChEBI" id="CHEBI:18420"/>
        <label>1</label>
    </ligand>
</feature>
<keyword id="KW-0963">Cytoplasm</keyword>
<keyword id="KW-0227">DNA damage</keyword>
<keyword id="KW-0233">DNA recombination</keyword>
<keyword id="KW-0234">DNA repair</keyword>
<keyword id="KW-0238">DNA-binding</keyword>
<keyword id="KW-0255">Endonuclease</keyword>
<keyword id="KW-0378">Hydrolase</keyword>
<keyword id="KW-0460">Magnesium</keyword>
<keyword id="KW-0479">Metal-binding</keyword>
<keyword id="KW-0540">Nuclease</keyword>
<keyword id="KW-1185">Reference proteome</keyword>
<name>RUVC_ANADE</name>
<reference key="1">
    <citation type="submission" date="2006-01" db="EMBL/GenBank/DDBJ databases">
        <title>Complete sequence of Anaeromyxobacter dehalogenans 2CP-C.</title>
        <authorList>
            <person name="Copeland A."/>
            <person name="Lucas S."/>
            <person name="Lapidus A."/>
            <person name="Barry K."/>
            <person name="Detter J.C."/>
            <person name="Glavina T."/>
            <person name="Hammon N."/>
            <person name="Israni S."/>
            <person name="Pitluck S."/>
            <person name="Brettin T."/>
            <person name="Bruce D."/>
            <person name="Han C."/>
            <person name="Tapia R."/>
            <person name="Gilna P."/>
            <person name="Kiss H."/>
            <person name="Schmutz J."/>
            <person name="Larimer F."/>
            <person name="Land M."/>
            <person name="Kyrpides N."/>
            <person name="Anderson I."/>
            <person name="Sanford R.A."/>
            <person name="Ritalahti K.M."/>
            <person name="Thomas H.S."/>
            <person name="Kirby J.R."/>
            <person name="Zhulin I.B."/>
            <person name="Loeffler F.E."/>
            <person name="Richardson P."/>
        </authorList>
    </citation>
    <scope>NUCLEOTIDE SEQUENCE [LARGE SCALE GENOMIC DNA]</scope>
    <source>
        <strain>2CP-C</strain>
    </source>
</reference>
<accession>Q2IPJ7</accession>
<proteinExistence type="inferred from homology"/>
<sequence length="185" mass="18866">MIVLGIDPGSRRCGYGVVAREGARLTVVESGVLVPGDLPMAQRLGRILDGLDALIARARPAEASVEAVFSGASPRSALVLGQARGVALAAAARAGLPVFEYAPSEVKLAFTGNGRAGKDQMLRTARMLLGAAPGLSDEADALAIAVCHLARRAFAVPAAGAGRAAAARAAAARLRPSRRDHRGTP</sequence>
<comment type="function">
    <text evidence="1">The RuvA-RuvB-RuvC complex processes Holliday junction (HJ) DNA during genetic recombination and DNA repair. Endonuclease that resolves HJ intermediates. Cleaves cruciform DNA by making single-stranded nicks across the HJ at symmetrical positions within the homologous arms, yielding a 5'-phosphate and a 3'-hydroxyl group; requires a central core of homology in the junction. The consensus cleavage sequence is 5'-(A/T)TT(C/G)-3'. Cleavage occurs on the 3'-side of the TT dinucleotide at the point of strand exchange. HJ branch migration catalyzed by RuvA-RuvB allows RuvC to scan DNA until it finds its consensus sequence, where it cleaves and resolves the cruciform DNA.</text>
</comment>
<comment type="catalytic activity">
    <reaction evidence="1">
        <text>Endonucleolytic cleavage at a junction such as a reciprocal single-stranded crossover between two homologous DNA duplexes (Holliday junction).</text>
        <dbReference type="EC" id="3.1.21.10"/>
    </reaction>
</comment>
<comment type="cofactor">
    <cofactor evidence="1">
        <name>Mg(2+)</name>
        <dbReference type="ChEBI" id="CHEBI:18420"/>
    </cofactor>
    <text evidence="1">Binds 2 Mg(2+) ion per subunit.</text>
</comment>
<comment type="subunit">
    <text evidence="1">Homodimer which binds Holliday junction (HJ) DNA. The HJ becomes 2-fold symmetrical on binding to RuvC with unstacked arms; it has a different conformation from HJ DNA in complex with RuvA. In the full resolvosome a probable DNA-RuvA(4)-RuvB(12)-RuvC(2) complex forms which resolves the HJ.</text>
</comment>
<comment type="subcellular location">
    <subcellularLocation>
        <location evidence="1">Cytoplasm</location>
    </subcellularLocation>
</comment>
<comment type="similarity">
    <text evidence="1">Belongs to the RuvC family.</text>
</comment>
<gene>
    <name evidence="1" type="primary">ruvC</name>
    <name type="ordered locus">Adeh_0951</name>
</gene>
<organism>
    <name type="scientific">Anaeromyxobacter dehalogenans (strain 2CP-C)</name>
    <dbReference type="NCBI Taxonomy" id="290397"/>
    <lineage>
        <taxon>Bacteria</taxon>
        <taxon>Pseudomonadati</taxon>
        <taxon>Myxococcota</taxon>
        <taxon>Myxococcia</taxon>
        <taxon>Myxococcales</taxon>
        <taxon>Cystobacterineae</taxon>
        <taxon>Anaeromyxobacteraceae</taxon>
        <taxon>Anaeromyxobacter</taxon>
    </lineage>
</organism>
<dbReference type="EC" id="3.1.21.10" evidence="1"/>
<dbReference type="EMBL" id="CP000251">
    <property type="protein sequence ID" value="ABC80726.1"/>
    <property type="molecule type" value="Genomic_DNA"/>
</dbReference>
<dbReference type="RefSeq" id="WP_011420009.1">
    <property type="nucleotide sequence ID" value="NC_007760.1"/>
</dbReference>
<dbReference type="SMR" id="Q2IPJ7"/>
<dbReference type="STRING" id="290397.Adeh_0951"/>
<dbReference type="KEGG" id="ade:Adeh_0951"/>
<dbReference type="eggNOG" id="COG0817">
    <property type="taxonomic scope" value="Bacteria"/>
</dbReference>
<dbReference type="HOGENOM" id="CLU_091257_2_1_7"/>
<dbReference type="OrthoDB" id="9805499at2"/>
<dbReference type="Proteomes" id="UP000001935">
    <property type="component" value="Chromosome"/>
</dbReference>
<dbReference type="GO" id="GO:0005737">
    <property type="term" value="C:cytoplasm"/>
    <property type="evidence" value="ECO:0007669"/>
    <property type="project" value="UniProtKB-SubCell"/>
</dbReference>
<dbReference type="GO" id="GO:0048476">
    <property type="term" value="C:Holliday junction resolvase complex"/>
    <property type="evidence" value="ECO:0007669"/>
    <property type="project" value="UniProtKB-UniRule"/>
</dbReference>
<dbReference type="GO" id="GO:0008821">
    <property type="term" value="F:crossover junction DNA endonuclease activity"/>
    <property type="evidence" value="ECO:0007669"/>
    <property type="project" value="UniProtKB-UniRule"/>
</dbReference>
<dbReference type="GO" id="GO:0003677">
    <property type="term" value="F:DNA binding"/>
    <property type="evidence" value="ECO:0007669"/>
    <property type="project" value="UniProtKB-KW"/>
</dbReference>
<dbReference type="GO" id="GO:0000287">
    <property type="term" value="F:magnesium ion binding"/>
    <property type="evidence" value="ECO:0007669"/>
    <property type="project" value="UniProtKB-UniRule"/>
</dbReference>
<dbReference type="GO" id="GO:0006310">
    <property type="term" value="P:DNA recombination"/>
    <property type="evidence" value="ECO:0007669"/>
    <property type="project" value="UniProtKB-UniRule"/>
</dbReference>
<dbReference type="GO" id="GO:0006281">
    <property type="term" value="P:DNA repair"/>
    <property type="evidence" value="ECO:0007669"/>
    <property type="project" value="UniProtKB-UniRule"/>
</dbReference>
<dbReference type="CDD" id="cd16962">
    <property type="entry name" value="RuvC"/>
    <property type="match status" value="1"/>
</dbReference>
<dbReference type="FunFam" id="3.30.420.10:FF:000002">
    <property type="entry name" value="Crossover junction endodeoxyribonuclease RuvC"/>
    <property type="match status" value="1"/>
</dbReference>
<dbReference type="Gene3D" id="3.30.420.10">
    <property type="entry name" value="Ribonuclease H-like superfamily/Ribonuclease H"/>
    <property type="match status" value="1"/>
</dbReference>
<dbReference type="HAMAP" id="MF_00034">
    <property type="entry name" value="RuvC"/>
    <property type="match status" value="1"/>
</dbReference>
<dbReference type="InterPro" id="IPR012337">
    <property type="entry name" value="RNaseH-like_sf"/>
</dbReference>
<dbReference type="InterPro" id="IPR036397">
    <property type="entry name" value="RNaseH_sf"/>
</dbReference>
<dbReference type="InterPro" id="IPR002176">
    <property type="entry name" value="X-over_junc_endoDNase_RuvC"/>
</dbReference>
<dbReference type="NCBIfam" id="TIGR00228">
    <property type="entry name" value="ruvC"/>
    <property type="match status" value="1"/>
</dbReference>
<dbReference type="PANTHER" id="PTHR30194">
    <property type="entry name" value="CROSSOVER JUNCTION ENDODEOXYRIBONUCLEASE RUVC"/>
    <property type="match status" value="1"/>
</dbReference>
<dbReference type="PANTHER" id="PTHR30194:SF3">
    <property type="entry name" value="CROSSOVER JUNCTION ENDODEOXYRIBONUCLEASE RUVC"/>
    <property type="match status" value="1"/>
</dbReference>
<dbReference type="Pfam" id="PF02075">
    <property type="entry name" value="RuvC"/>
    <property type="match status" value="1"/>
</dbReference>
<dbReference type="PRINTS" id="PR00696">
    <property type="entry name" value="RSOLVASERUVC"/>
</dbReference>
<dbReference type="SUPFAM" id="SSF53098">
    <property type="entry name" value="Ribonuclease H-like"/>
    <property type="match status" value="1"/>
</dbReference>